<dbReference type="EC" id="3.5.4.27" evidence="1"/>
<dbReference type="EMBL" id="CP000743">
    <property type="protein sequence ID" value="ABR56027.1"/>
    <property type="molecule type" value="Genomic_DNA"/>
</dbReference>
<dbReference type="RefSeq" id="WP_011973159.1">
    <property type="nucleotide sequence ID" value="NC_009635.1"/>
</dbReference>
<dbReference type="SMR" id="A6UU55"/>
<dbReference type="STRING" id="419665.Maeo_0441"/>
<dbReference type="GeneID" id="5327209"/>
<dbReference type="KEGG" id="mae:Maeo_0441"/>
<dbReference type="eggNOG" id="arCOG02675">
    <property type="taxonomic scope" value="Archaea"/>
</dbReference>
<dbReference type="HOGENOM" id="CLU_876031_0_0_2"/>
<dbReference type="OrthoDB" id="105468at2157"/>
<dbReference type="UniPathway" id="UPA00640">
    <property type="reaction ID" value="UER00694"/>
</dbReference>
<dbReference type="Proteomes" id="UP000001106">
    <property type="component" value="Chromosome"/>
</dbReference>
<dbReference type="GO" id="GO:0005737">
    <property type="term" value="C:cytoplasm"/>
    <property type="evidence" value="ECO:0007669"/>
    <property type="project" value="UniProtKB-SubCell"/>
</dbReference>
<dbReference type="GO" id="GO:0018759">
    <property type="term" value="F:methenyltetrahydromethanopterin cyclohydrolase activity"/>
    <property type="evidence" value="ECO:0007669"/>
    <property type="project" value="UniProtKB-UniRule"/>
</dbReference>
<dbReference type="GO" id="GO:0019386">
    <property type="term" value="P:methanogenesis, from carbon dioxide"/>
    <property type="evidence" value="ECO:0007669"/>
    <property type="project" value="UniProtKB-UniRule"/>
</dbReference>
<dbReference type="GO" id="GO:0006730">
    <property type="term" value="P:one-carbon metabolic process"/>
    <property type="evidence" value="ECO:0007669"/>
    <property type="project" value="UniProtKB-UniRule"/>
</dbReference>
<dbReference type="CDD" id="cd00545">
    <property type="entry name" value="MCH"/>
    <property type="match status" value="1"/>
</dbReference>
<dbReference type="Gene3D" id="3.10.340.11">
    <property type="entry name" value="Methenyltetrahydromethanopterin Cyclohydrolase, Chain A, domain 1"/>
    <property type="match status" value="1"/>
</dbReference>
<dbReference type="Gene3D" id="3.30.1030.10">
    <property type="entry name" value="Methenyltetrahydromethanopterin Cyclohydrolase, Chain A, domain 2"/>
    <property type="match status" value="1"/>
</dbReference>
<dbReference type="HAMAP" id="MF_00486">
    <property type="entry name" value="McH"/>
    <property type="match status" value="1"/>
</dbReference>
<dbReference type="InterPro" id="IPR003209">
    <property type="entry name" value="METHMP_CycHdrlase"/>
</dbReference>
<dbReference type="NCBIfam" id="TIGR03120">
    <property type="entry name" value="one_C_mch"/>
    <property type="match status" value="1"/>
</dbReference>
<dbReference type="Pfam" id="PF02289">
    <property type="entry name" value="MCH"/>
    <property type="match status" value="1"/>
</dbReference>
<dbReference type="SUPFAM" id="SSF56199">
    <property type="entry name" value="Methenyltetrahydromethanopterin cyclohydrolase"/>
    <property type="match status" value="1"/>
</dbReference>
<sequence>MLSVNLKSLPIVENMIEKAEEMNIEVIKLENGATVLDCGVNVMGSIEAGKAFTKICLGGLAHVGVSIAGTVSDEMVLPCVKVKTSHPAIATLGSQKAGWTINIGKFFAMGSGPARALAKIPKATYEEINYEDNADVAILCLEASQLPNEEVAEFVAEKCGVDVSKVYLLVAPTSSLVGSIQISGRVVENGTYKMLEALHFDVNKVKFAAGIAPVAPIIGDDLAMMGATNDMVLYGGRTYYYIESDENDDVEALCKALPSCSSQDYGKPFLETFKAANYDFYKIDKGMFAPAVVVINDMRTGKLVTYGKPHVDVLKKSLGYKELE</sequence>
<gene>
    <name evidence="1" type="primary">mch</name>
    <name type="ordered locus">Maeo_0441</name>
</gene>
<evidence type="ECO:0000255" key="1">
    <source>
        <dbReference type="HAMAP-Rule" id="MF_00486"/>
    </source>
</evidence>
<comment type="function">
    <text evidence="1">Catalyzes the reversible interconversion of 5-formyl-H(4)MPT to methenyl-H(4)MPT(+).</text>
</comment>
<comment type="catalytic activity">
    <reaction evidence="1">
        <text>5,10-methenyl-5,6,7,8-tetrahydromethanopterin + H2O = N(5)-formyl-5,6,7,8-tetrahydromethanopterin + H(+)</text>
        <dbReference type="Rhea" id="RHEA:19053"/>
        <dbReference type="ChEBI" id="CHEBI:15377"/>
        <dbReference type="ChEBI" id="CHEBI:15378"/>
        <dbReference type="ChEBI" id="CHEBI:58018"/>
        <dbReference type="ChEBI" id="CHEBI:58337"/>
        <dbReference type="EC" id="3.5.4.27"/>
    </reaction>
</comment>
<comment type="pathway">
    <text evidence="1">One-carbon metabolism; methanogenesis from CO(2); 5,10-methenyl-5,6,7,8-tetrahydromethanopterin from CO(2): step 3/3.</text>
</comment>
<comment type="subcellular location">
    <subcellularLocation>
        <location evidence="1">Cytoplasm</location>
    </subcellularLocation>
</comment>
<comment type="similarity">
    <text evidence="1">Belongs to the MCH family.</text>
</comment>
<feature type="chain" id="PRO_1000014396" description="Methenyltetrahydromethanopterin cyclohydrolase">
    <location>
        <begin position="1"/>
        <end position="324"/>
    </location>
</feature>
<protein>
    <recommendedName>
        <fullName evidence="1">Methenyltetrahydromethanopterin cyclohydrolase</fullName>
        <ecNumber evidence="1">3.5.4.27</ecNumber>
    </recommendedName>
    <alternativeName>
        <fullName evidence="1">Methenyl-H4MPT cyclohydrolase</fullName>
    </alternativeName>
</protein>
<name>MCH_META3</name>
<keyword id="KW-0963">Cytoplasm</keyword>
<keyword id="KW-0378">Hydrolase</keyword>
<keyword id="KW-0484">Methanogenesis</keyword>
<keyword id="KW-0554">One-carbon metabolism</keyword>
<reference key="1">
    <citation type="submission" date="2007-06" db="EMBL/GenBank/DDBJ databases">
        <title>Complete sequence of Methanococcus aeolicus Nankai-3.</title>
        <authorList>
            <consortium name="US DOE Joint Genome Institute"/>
            <person name="Copeland A."/>
            <person name="Lucas S."/>
            <person name="Lapidus A."/>
            <person name="Barry K."/>
            <person name="Glavina del Rio T."/>
            <person name="Dalin E."/>
            <person name="Tice H."/>
            <person name="Pitluck S."/>
            <person name="Chain P."/>
            <person name="Malfatti S."/>
            <person name="Shin M."/>
            <person name="Vergez L."/>
            <person name="Schmutz J."/>
            <person name="Larimer F."/>
            <person name="Land M."/>
            <person name="Hauser L."/>
            <person name="Kyrpides N."/>
            <person name="Lykidis A."/>
            <person name="Sieprawska-Lupa M."/>
            <person name="Whitman W.B."/>
            <person name="Richardson P."/>
        </authorList>
    </citation>
    <scope>NUCLEOTIDE SEQUENCE [LARGE SCALE GENOMIC DNA]</scope>
    <source>
        <strain>ATCC BAA-1280 / DSM 17508 / OCM 812 / Nankai-3</strain>
    </source>
</reference>
<proteinExistence type="inferred from homology"/>
<organism>
    <name type="scientific">Methanococcus aeolicus (strain ATCC BAA-1280 / DSM 17508 / OCM 812 / Nankai-3)</name>
    <dbReference type="NCBI Taxonomy" id="419665"/>
    <lineage>
        <taxon>Archaea</taxon>
        <taxon>Methanobacteriati</taxon>
        <taxon>Methanobacteriota</taxon>
        <taxon>Methanomada group</taxon>
        <taxon>Methanococci</taxon>
        <taxon>Methanococcales</taxon>
        <taxon>Methanococcaceae</taxon>
        <taxon>Methanococcus</taxon>
    </lineage>
</organism>
<accession>A6UU55</accession>